<proteinExistence type="evidence at transcript level"/>
<evidence type="ECO:0000250" key="1">
    <source>
        <dbReference type="UniProtKB" id="Q8N5C7"/>
    </source>
</evidence>
<evidence type="ECO:0000256" key="2">
    <source>
        <dbReference type="SAM" id="MobiDB-lite"/>
    </source>
</evidence>
<evidence type="ECO:0000305" key="3"/>
<evidence type="ECO:0000312" key="4">
    <source>
        <dbReference type="RGD" id="1311144"/>
    </source>
</evidence>
<feature type="chain" id="PRO_0000308215" description="tRNA-uridine aminocarboxypropyltransferase 1">
    <location>
        <begin position="1"/>
        <end position="304"/>
    </location>
</feature>
<feature type="region of interest" description="Disordered" evidence="2">
    <location>
        <begin position="1"/>
        <end position="30"/>
    </location>
</feature>
<feature type="short sequence motif" description="DXTW">
    <location>
        <begin position="206"/>
        <end position="209"/>
    </location>
</feature>
<feature type="compositionally biased region" description="Polar residues" evidence="2">
    <location>
        <begin position="15"/>
        <end position="30"/>
    </location>
</feature>
<gene>
    <name evidence="4" type="primary">Dtwd1</name>
</gene>
<organism>
    <name type="scientific">Rattus norvegicus</name>
    <name type="common">Rat</name>
    <dbReference type="NCBI Taxonomy" id="10116"/>
    <lineage>
        <taxon>Eukaryota</taxon>
        <taxon>Metazoa</taxon>
        <taxon>Chordata</taxon>
        <taxon>Craniata</taxon>
        <taxon>Vertebrata</taxon>
        <taxon>Euteleostomi</taxon>
        <taxon>Mammalia</taxon>
        <taxon>Eutheria</taxon>
        <taxon>Euarchontoglires</taxon>
        <taxon>Glires</taxon>
        <taxon>Rodentia</taxon>
        <taxon>Myomorpha</taxon>
        <taxon>Muroidea</taxon>
        <taxon>Muridae</taxon>
        <taxon>Murinae</taxon>
        <taxon>Rattus</taxon>
    </lineage>
</organism>
<reference key="1">
    <citation type="journal article" date="2004" name="Genome Res.">
        <title>The status, quality, and expansion of the NIH full-length cDNA project: the Mammalian Gene Collection (MGC).</title>
        <authorList>
            <consortium name="The MGC Project Team"/>
        </authorList>
    </citation>
    <scope>NUCLEOTIDE SEQUENCE [LARGE SCALE MRNA]</scope>
    <source>
        <tissue>Lung</tissue>
    </source>
</reference>
<dbReference type="EC" id="2.5.1.25" evidence="1"/>
<dbReference type="EMBL" id="BC079068">
    <property type="protein sequence ID" value="AAH79068.1"/>
    <property type="molecule type" value="mRNA"/>
</dbReference>
<dbReference type="RefSeq" id="NP_001013943.1">
    <property type="nucleotide sequence ID" value="NM_001013921.1"/>
</dbReference>
<dbReference type="FunCoup" id="Q6AYF5">
    <property type="interactions" value="1932"/>
</dbReference>
<dbReference type="STRING" id="10116.ENSRNOP00000012966"/>
<dbReference type="PhosphoSitePlus" id="Q6AYF5"/>
<dbReference type="PaxDb" id="10116-ENSRNOP00000012966"/>
<dbReference type="GeneID" id="296119"/>
<dbReference type="KEGG" id="rno:296119"/>
<dbReference type="UCSC" id="RGD:1311144">
    <property type="organism name" value="rat"/>
</dbReference>
<dbReference type="AGR" id="RGD:1311144"/>
<dbReference type="CTD" id="56986"/>
<dbReference type="RGD" id="1311144">
    <property type="gene designation" value="Dtwd1"/>
</dbReference>
<dbReference type="eggNOG" id="KOG3795">
    <property type="taxonomic scope" value="Eukaryota"/>
</dbReference>
<dbReference type="InParanoid" id="Q6AYF5"/>
<dbReference type="OrthoDB" id="3173at2759"/>
<dbReference type="PhylomeDB" id="Q6AYF5"/>
<dbReference type="PRO" id="PR:Q6AYF5"/>
<dbReference type="Proteomes" id="UP000002494">
    <property type="component" value="Unplaced"/>
</dbReference>
<dbReference type="GO" id="GO:0005634">
    <property type="term" value="C:nucleus"/>
    <property type="evidence" value="ECO:0000250"/>
    <property type="project" value="UniProtKB"/>
</dbReference>
<dbReference type="GO" id="GO:0016432">
    <property type="term" value="F:tRNA-uridine aminocarboxypropyltransferase activity"/>
    <property type="evidence" value="ECO:0000250"/>
    <property type="project" value="UniProtKB"/>
</dbReference>
<dbReference type="GO" id="GO:0006400">
    <property type="term" value="P:tRNA modification"/>
    <property type="evidence" value="ECO:0000250"/>
    <property type="project" value="UniProtKB"/>
</dbReference>
<dbReference type="InterPro" id="IPR005636">
    <property type="entry name" value="DTW"/>
</dbReference>
<dbReference type="InterPro" id="IPR051521">
    <property type="entry name" value="tRNA_Mod/Golgi_Maint"/>
</dbReference>
<dbReference type="PANTHER" id="PTHR15627">
    <property type="entry name" value="NATURAL KILLER CELL-SPECIFIC ANTIGEN KLIP1"/>
    <property type="match status" value="1"/>
</dbReference>
<dbReference type="PANTHER" id="PTHR15627:SF8">
    <property type="entry name" value="TRNA-URIDINE AMINOCARBOXYPROPYLTRANSFERASE 1"/>
    <property type="match status" value="1"/>
</dbReference>
<dbReference type="Pfam" id="PF03942">
    <property type="entry name" value="DTW"/>
    <property type="match status" value="1"/>
</dbReference>
<dbReference type="SMART" id="SM01144">
    <property type="entry name" value="DTW"/>
    <property type="match status" value="1"/>
</dbReference>
<protein>
    <recommendedName>
        <fullName evidence="3">tRNA-uridine aminocarboxypropyltransferase 1</fullName>
        <ecNumber evidence="1">2.5.1.25</ecNumber>
    </recommendedName>
    <alternativeName>
        <fullName evidence="3">DTW domain-containing protein 1</fullName>
    </alternativeName>
</protein>
<keyword id="KW-0539">Nucleus</keyword>
<keyword id="KW-1185">Reference proteome</keyword>
<keyword id="KW-0949">S-adenosyl-L-methionine</keyword>
<keyword id="KW-0808">Transferase</keyword>
<keyword id="KW-0819">tRNA processing</keyword>
<comment type="function">
    <text evidence="1">Catalyzes the formation of 3-(3-amino-3-carboxypropyl)uridine (acp3U) at position 20 in the D-loop of several cytoplasmic tRNAs (acp3U(20)).</text>
</comment>
<comment type="catalytic activity">
    <reaction evidence="1">
        <text>a uridine in tRNA + S-adenosyl-L-methionine = a 3-[(3S)-3-amino-3-carboxypropyl]uridine in tRNA + S-methyl-5'-thioadenosine + H(+)</text>
        <dbReference type="Rhea" id="RHEA:62432"/>
        <dbReference type="Rhea" id="RHEA-COMP:13339"/>
        <dbReference type="Rhea" id="RHEA-COMP:16092"/>
        <dbReference type="ChEBI" id="CHEBI:15378"/>
        <dbReference type="ChEBI" id="CHEBI:17509"/>
        <dbReference type="ChEBI" id="CHEBI:59789"/>
        <dbReference type="ChEBI" id="CHEBI:65315"/>
        <dbReference type="ChEBI" id="CHEBI:82930"/>
        <dbReference type="EC" id="2.5.1.25"/>
    </reaction>
</comment>
<comment type="subcellular location">
    <subcellularLocation>
        <location evidence="1">Nucleus</location>
    </subcellularLocation>
</comment>
<comment type="similarity">
    <text evidence="3">Belongs to the TDD superfamily. DTWD1 family.</text>
</comment>
<sequence>MALSPSVVPQESEENNANCVETKQSQTASTASEDPLQHLCLASQEVLHKAQQSGRSRCLQCGGSRMFYCYTCYVPVENVPTEQIPFVQLPLKIDIIKHPNETDGKSTAVHAKLLAPDSVNIYTYPCIPEYEGQDHEVVLVFPGPQSISIKDVSFHLQKRIESKGGDKADDLDMPPRKLVRTEAQEGWHLNESMGKGPELKRVVFIDSTWSQTNQITSDERLRELLQVELKTRKTCFWRHQKGKPDTFLSTIEAIYYFLVDYHRAVQKEEYRGQYDNLLFFYSFMYRLIKEARRSGEKAKQKPIH</sequence>
<accession>Q6AYF5</accession>
<name>DTWD1_RAT</name>